<comment type="function">
    <text evidence="1">Attaches a formyl group to the free amino group of methionyl-tRNA(fMet). The formyl group appears to play a dual role in the initiator identity of N-formylmethionyl-tRNA by promoting its recognition by IF2 and preventing the misappropriation of this tRNA by the elongation apparatus.</text>
</comment>
<comment type="catalytic activity">
    <reaction evidence="1">
        <text>L-methionyl-tRNA(fMet) + (6R)-10-formyltetrahydrofolate = N-formyl-L-methionyl-tRNA(fMet) + (6S)-5,6,7,8-tetrahydrofolate + H(+)</text>
        <dbReference type="Rhea" id="RHEA:24380"/>
        <dbReference type="Rhea" id="RHEA-COMP:9952"/>
        <dbReference type="Rhea" id="RHEA-COMP:9953"/>
        <dbReference type="ChEBI" id="CHEBI:15378"/>
        <dbReference type="ChEBI" id="CHEBI:57453"/>
        <dbReference type="ChEBI" id="CHEBI:78530"/>
        <dbReference type="ChEBI" id="CHEBI:78844"/>
        <dbReference type="ChEBI" id="CHEBI:195366"/>
        <dbReference type="EC" id="2.1.2.9"/>
    </reaction>
</comment>
<comment type="similarity">
    <text evidence="1">Belongs to the Fmt family.</text>
</comment>
<protein>
    <recommendedName>
        <fullName evidence="1">Methionyl-tRNA formyltransferase</fullName>
        <ecNumber evidence="1">2.1.2.9</ecNumber>
    </recommendedName>
</protein>
<keyword id="KW-0648">Protein biosynthesis</keyword>
<keyword id="KW-1185">Reference proteome</keyword>
<keyword id="KW-0808">Transferase</keyword>
<feature type="chain" id="PRO_0000083044" description="Methionyl-tRNA formyltransferase">
    <location>
        <begin position="1"/>
        <end position="301"/>
    </location>
</feature>
<feature type="binding site" evidence="1">
    <location>
        <begin position="109"/>
        <end position="112"/>
    </location>
    <ligand>
        <name>(6S)-5,6,7,8-tetrahydrofolate</name>
        <dbReference type="ChEBI" id="CHEBI:57453"/>
    </ligand>
</feature>
<reference key="1">
    <citation type="journal article" date="2004" name="Nature">
        <title>Genome sequence of Silicibacter pomeroyi reveals adaptations to the marine environment.</title>
        <authorList>
            <person name="Moran M.A."/>
            <person name="Buchan A."/>
            <person name="Gonzalez J.M."/>
            <person name="Heidelberg J.F."/>
            <person name="Whitman W.B."/>
            <person name="Kiene R.P."/>
            <person name="Henriksen J.R."/>
            <person name="King G.M."/>
            <person name="Belas R."/>
            <person name="Fuqua C."/>
            <person name="Brinkac L.M."/>
            <person name="Lewis M."/>
            <person name="Johri S."/>
            <person name="Weaver B."/>
            <person name="Pai G."/>
            <person name="Eisen J.A."/>
            <person name="Rahe E."/>
            <person name="Sheldon W.M."/>
            <person name="Ye W."/>
            <person name="Miller T.R."/>
            <person name="Carlton J."/>
            <person name="Rasko D.A."/>
            <person name="Paulsen I.T."/>
            <person name="Ren Q."/>
            <person name="Daugherty S.C."/>
            <person name="DeBoy R.T."/>
            <person name="Dodson R.J."/>
            <person name="Durkin A.S."/>
            <person name="Madupu R."/>
            <person name="Nelson W.C."/>
            <person name="Sullivan S.A."/>
            <person name="Rosovitz M.J."/>
            <person name="Haft D.H."/>
            <person name="Selengut J."/>
            <person name="Ward N."/>
        </authorList>
    </citation>
    <scope>NUCLEOTIDE SEQUENCE [LARGE SCALE GENOMIC DNA]</scope>
    <source>
        <strain>ATCC 700808 / DSM 15171 / DSS-3</strain>
    </source>
</reference>
<reference key="2">
    <citation type="journal article" date="2014" name="Stand. Genomic Sci.">
        <title>An updated genome annotation for the model marine bacterium Ruegeria pomeroyi DSS-3.</title>
        <authorList>
            <person name="Rivers A.R."/>
            <person name="Smith C.B."/>
            <person name="Moran M.A."/>
        </authorList>
    </citation>
    <scope>GENOME REANNOTATION</scope>
    <source>
        <strain>ATCC 700808 / DSM 15171 / DSS-3</strain>
    </source>
</reference>
<proteinExistence type="inferred from homology"/>
<evidence type="ECO:0000255" key="1">
    <source>
        <dbReference type="HAMAP-Rule" id="MF_00182"/>
    </source>
</evidence>
<dbReference type="EC" id="2.1.2.9" evidence="1"/>
<dbReference type="EMBL" id="CP000031">
    <property type="protein sequence ID" value="AAV96451.1"/>
    <property type="molecule type" value="Genomic_DNA"/>
</dbReference>
<dbReference type="RefSeq" id="WP_011048906.1">
    <property type="nucleotide sequence ID" value="NC_003911.12"/>
</dbReference>
<dbReference type="SMR" id="Q5LNI8"/>
<dbReference type="STRING" id="246200.SPO3216"/>
<dbReference type="PaxDb" id="246200-SPO3216"/>
<dbReference type="KEGG" id="sil:SPO3216"/>
<dbReference type="eggNOG" id="COG0223">
    <property type="taxonomic scope" value="Bacteria"/>
</dbReference>
<dbReference type="HOGENOM" id="CLU_033347_1_2_5"/>
<dbReference type="OrthoDB" id="9802815at2"/>
<dbReference type="Proteomes" id="UP000001023">
    <property type="component" value="Chromosome"/>
</dbReference>
<dbReference type="GO" id="GO:0005829">
    <property type="term" value="C:cytosol"/>
    <property type="evidence" value="ECO:0007669"/>
    <property type="project" value="TreeGrafter"/>
</dbReference>
<dbReference type="GO" id="GO:0004479">
    <property type="term" value="F:methionyl-tRNA formyltransferase activity"/>
    <property type="evidence" value="ECO:0007669"/>
    <property type="project" value="UniProtKB-UniRule"/>
</dbReference>
<dbReference type="CDD" id="cd08646">
    <property type="entry name" value="FMT_core_Met-tRNA-FMT_N"/>
    <property type="match status" value="1"/>
</dbReference>
<dbReference type="CDD" id="cd08704">
    <property type="entry name" value="Met_tRNA_FMT_C"/>
    <property type="match status" value="1"/>
</dbReference>
<dbReference type="FunFam" id="3.40.50.12230:FF:000001">
    <property type="entry name" value="Methionyl-tRNA formyltransferase"/>
    <property type="match status" value="1"/>
</dbReference>
<dbReference type="Gene3D" id="3.40.50.12230">
    <property type="match status" value="1"/>
</dbReference>
<dbReference type="HAMAP" id="MF_00182">
    <property type="entry name" value="Formyl_trans"/>
    <property type="match status" value="1"/>
</dbReference>
<dbReference type="InterPro" id="IPR005794">
    <property type="entry name" value="Fmt"/>
</dbReference>
<dbReference type="InterPro" id="IPR005793">
    <property type="entry name" value="Formyl_trans_C"/>
</dbReference>
<dbReference type="InterPro" id="IPR002376">
    <property type="entry name" value="Formyl_transf_N"/>
</dbReference>
<dbReference type="InterPro" id="IPR036477">
    <property type="entry name" value="Formyl_transf_N_sf"/>
</dbReference>
<dbReference type="InterPro" id="IPR011034">
    <property type="entry name" value="Formyl_transferase-like_C_sf"/>
</dbReference>
<dbReference type="InterPro" id="IPR001555">
    <property type="entry name" value="GART_AS"/>
</dbReference>
<dbReference type="InterPro" id="IPR044135">
    <property type="entry name" value="Met-tRNA-FMT_C"/>
</dbReference>
<dbReference type="InterPro" id="IPR041711">
    <property type="entry name" value="Met-tRNA-FMT_N"/>
</dbReference>
<dbReference type="NCBIfam" id="TIGR00460">
    <property type="entry name" value="fmt"/>
    <property type="match status" value="1"/>
</dbReference>
<dbReference type="PANTHER" id="PTHR11138">
    <property type="entry name" value="METHIONYL-TRNA FORMYLTRANSFERASE"/>
    <property type="match status" value="1"/>
</dbReference>
<dbReference type="PANTHER" id="PTHR11138:SF5">
    <property type="entry name" value="METHIONYL-TRNA FORMYLTRANSFERASE, MITOCHONDRIAL"/>
    <property type="match status" value="1"/>
</dbReference>
<dbReference type="Pfam" id="PF02911">
    <property type="entry name" value="Formyl_trans_C"/>
    <property type="match status" value="1"/>
</dbReference>
<dbReference type="Pfam" id="PF00551">
    <property type="entry name" value="Formyl_trans_N"/>
    <property type="match status" value="1"/>
</dbReference>
<dbReference type="SUPFAM" id="SSF50486">
    <property type="entry name" value="FMT C-terminal domain-like"/>
    <property type="match status" value="1"/>
</dbReference>
<dbReference type="SUPFAM" id="SSF53328">
    <property type="entry name" value="Formyltransferase"/>
    <property type="match status" value="1"/>
</dbReference>
<dbReference type="PROSITE" id="PS00373">
    <property type="entry name" value="GART"/>
    <property type="match status" value="1"/>
</dbReference>
<name>FMT_RUEPO</name>
<sequence length="301" mass="31935">MRVVFMGTPDFSVPVLEALVAAGHEIAAVYCQPPRPAGRGKKDRPTPVHARALDLGLEVRHPVSLKGAEAQADFAALGADVAVVVAYGLILPQAVLDAPRHGCLNIHASLLPRWRGAAPIHRAIMAGDEATGICIMQMEAGLDTGPVLLRSRTPIRAEETTGALHDRLSAMGADLIVEALARLPELTPEPQPEDGVTYAAKIDKAEARVDWTRPAVAIDRQIRGLSPFPGAWTEIAGERVKLLASRLDEGQGTPGEVLDDALTIACGTGAISLIRLQRAGKAAQDADIFLRGWPVPKGTRL</sequence>
<gene>
    <name evidence="1" type="primary">fmt</name>
    <name type="ordered locus">SPO3216</name>
</gene>
<organism>
    <name type="scientific">Ruegeria pomeroyi (strain ATCC 700808 / DSM 15171 / DSS-3)</name>
    <name type="common">Silicibacter pomeroyi</name>
    <dbReference type="NCBI Taxonomy" id="246200"/>
    <lineage>
        <taxon>Bacteria</taxon>
        <taxon>Pseudomonadati</taxon>
        <taxon>Pseudomonadota</taxon>
        <taxon>Alphaproteobacteria</taxon>
        <taxon>Rhodobacterales</taxon>
        <taxon>Roseobacteraceae</taxon>
        <taxon>Ruegeria</taxon>
    </lineage>
</organism>
<accession>Q5LNI8</accession>